<dbReference type="EC" id="5.3.1.16" evidence="1"/>
<dbReference type="EMBL" id="AE017355">
    <property type="protein sequence ID" value="AAT59421.1"/>
    <property type="molecule type" value="Genomic_DNA"/>
</dbReference>
<dbReference type="RefSeq" id="WP_000402280.1">
    <property type="nucleotide sequence ID" value="NC_005957.1"/>
</dbReference>
<dbReference type="RefSeq" id="YP_035627.1">
    <property type="nucleotide sequence ID" value="NC_005957.1"/>
</dbReference>
<dbReference type="SMR" id="Q6HLE4"/>
<dbReference type="KEGG" id="btk:BT9727_1293"/>
<dbReference type="PATRIC" id="fig|281309.8.peg.1362"/>
<dbReference type="HOGENOM" id="CLU_048577_1_1_9"/>
<dbReference type="UniPathway" id="UPA00031">
    <property type="reaction ID" value="UER00009"/>
</dbReference>
<dbReference type="Proteomes" id="UP000001301">
    <property type="component" value="Chromosome"/>
</dbReference>
<dbReference type="GO" id="GO:0005737">
    <property type="term" value="C:cytoplasm"/>
    <property type="evidence" value="ECO:0007669"/>
    <property type="project" value="UniProtKB-SubCell"/>
</dbReference>
<dbReference type="GO" id="GO:0003949">
    <property type="term" value="F:1-(5-phosphoribosyl)-5-[(5-phosphoribosylamino)methylideneamino]imidazole-4-carboxamide isomerase activity"/>
    <property type="evidence" value="ECO:0007669"/>
    <property type="project" value="UniProtKB-UniRule"/>
</dbReference>
<dbReference type="GO" id="GO:0000105">
    <property type="term" value="P:L-histidine biosynthetic process"/>
    <property type="evidence" value="ECO:0007669"/>
    <property type="project" value="UniProtKB-UniRule"/>
</dbReference>
<dbReference type="GO" id="GO:0000162">
    <property type="term" value="P:L-tryptophan biosynthetic process"/>
    <property type="evidence" value="ECO:0007669"/>
    <property type="project" value="TreeGrafter"/>
</dbReference>
<dbReference type="CDD" id="cd04732">
    <property type="entry name" value="HisA"/>
    <property type="match status" value="1"/>
</dbReference>
<dbReference type="FunFam" id="3.20.20.70:FF:000009">
    <property type="entry name" value="1-(5-phosphoribosyl)-5-[(5-phosphoribosylamino)methylideneamino] imidazole-4-carboxamide isomerase"/>
    <property type="match status" value="1"/>
</dbReference>
<dbReference type="Gene3D" id="3.20.20.70">
    <property type="entry name" value="Aldolase class I"/>
    <property type="match status" value="1"/>
</dbReference>
<dbReference type="HAMAP" id="MF_01014">
    <property type="entry name" value="HisA"/>
    <property type="match status" value="1"/>
</dbReference>
<dbReference type="InterPro" id="IPR013785">
    <property type="entry name" value="Aldolase_TIM"/>
</dbReference>
<dbReference type="InterPro" id="IPR006062">
    <property type="entry name" value="His_biosynth"/>
</dbReference>
<dbReference type="InterPro" id="IPR006063">
    <property type="entry name" value="HisA_bact_arch"/>
</dbReference>
<dbReference type="InterPro" id="IPR044524">
    <property type="entry name" value="Isoase_HisA-like"/>
</dbReference>
<dbReference type="InterPro" id="IPR023016">
    <property type="entry name" value="Isoase_HisA-like_bact"/>
</dbReference>
<dbReference type="InterPro" id="IPR011060">
    <property type="entry name" value="RibuloseP-bd_barrel"/>
</dbReference>
<dbReference type="NCBIfam" id="TIGR00007">
    <property type="entry name" value="1-(5-phosphoribosyl)-5-[(5-phosphoribosylamino)methylideneamino]imidazole-4-carboxamide isomerase"/>
    <property type="match status" value="1"/>
</dbReference>
<dbReference type="PANTHER" id="PTHR43090">
    <property type="entry name" value="1-(5-PHOSPHORIBOSYL)-5-[(5-PHOSPHORIBOSYLAMINO)METHYLIDENEAMINO] IMIDAZOLE-4-CARBOXAMIDE ISOMERASE"/>
    <property type="match status" value="1"/>
</dbReference>
<dbReference type="PANTHER" id="PTHR43090:SF2">
    <property type="entry name" value="1-(5-PHOSPHORIBOSYL)-5-[(5-PHOSPHORIBOSYLAMINO)METHYLIDENEAMINO] IMIDAZOLE-4-CARBOXAMIDE ISOMERASE"/>
    <property type="match status" value="1"/>
</dbReference>
<dbReference type="Pfam" id="PF00977">
    <property type="entry name" value="His_biosynth"/>
    <property type="match status" value="1"/>
</dbReference>
<dbReference type="SUPFAM" id="SSF51366">
    <property type="entry name" value="Ribulose-phoshate binding barrel"/>
    <property type="match status" value="1"/>
</dbReference>
<protein>
    <recommendedName>
        <fullName evidence="1">1-(5-phosphoribosyl)-5-[(5-phosphoribosylamino)methylideneamino] imidazole-4-carboxamide isomerase</fullName>
        <ecNumber evidence="1">5.3.1.16</ecNumber>
    </recommendedName>
    <alternativeName>
        <fullName evidence="1">Phosphoribosylformimino-5-aminoimidazole carboxamide ribotide isomerase</fullName>
    </alternativeName>
</protein>
<organism>
    <name type="scientific">Bacillus thuringiensis subsp. konkukian (strain 97-27)</name>
    <dbReference type="NCBI Taxonomy" id="281309"/>
    <lineage>
        <taxon>Bacteria</taxon>
        <taxon>Bacillati</taxon>
        <taxon>Bacillota</taxon>
        <taxon>Bacilli</taxon>
        <taxon>Bacillales</taxon>
        <taxon>Bacillaceae</taxon>
        <taxon>Bacillus</taxon>
        <taxon>Bacillus cereus group</taxon>
    </lineage>
</organism>
<comment type="catalytic activity">
    <reaction evidence="1">
        <text>1-(5-phospho-beta-D-ribosyl)-5-[(5-phospho-beta-D-ribosylamino)methylideneamino]imidazole-4-carboxamide = 5-[(5-phospho-1-deoxy-D-ribulos-1-ylimino)methylamino]-1-(5-phospho-beta-D-ribosyl)imidazole-4-carboxamide</text>
        <dbReference type="Rhea" id="RHEA:15469"/>
        <dbReference type="ChEBI" id="CHEBI:58435"/>
        <dbReference type="ChEBI" id="CHEBI:58525"/>
        <dbReference type="EC" id="5.3.1.16"/>
    </reaction>
</comment>
<comment type="pathway">
    <text evidence="1">Amino-acid biosynthesis; L-histidine biosynthesis; L-histidine from 5-phospho-alpha-D-ribose 1-diphosphate: step 4/9.</text>
</comment>
<comment type="subcellular location">
    <subcellularLocation>
        <location evidence="1">Cytoplasm</location>
    </subcellularLocation>
</comment>
<comment type="similarity">
    <text evidence="1">Belongs to the HisA/HisF family.</text>
</comment>
<gene>
    <name evidence="1" type="primary">hisA</name>
    <name type="ordered locus">BT9727_1293</name>
</gene>
<name>HIS4_BACHK</name>
<keyword id="KW-0028">Amino-acid biosynthesis</keyword>
<keyword id="KW-0963">Cytoplasm</keyword>
<keyword id="KW-0368">Histidine biosynthesis</keyword>
<keyword id="KW-0413">Isomerase</keyword>
<evidence type="ECO:0000255" key="1">
    <source>
        <dbReference type="HAMAP-Rule" id="MF_01014"/>
    </source>
</evidence>
<sequence>MEIFPAIDLKEGRCVRLYQGEFSKETVMNEDPVAQAIIFEKFGAKRLHIVDLDGAVAGESLNLSVIERICKAVRIPVQVGGGIRSLVAVEKLFSVGVDKVILGTAALYDKTFLEEAVLLYKEKIIVGIDAKNGFVATRGWLDVSEISYIDLAKQMEKIGVQTIVFTDISKDGTLAGPNIEQLELLQKSVAIRLIASGGVASIQDVKKLNDMNIYGVIIGKALYEKTIDLEEVLEVTKLC</sequence>
<reference key="1">
    <citation type="journal article" date="2006" name="J. Bacteriol.">
        <title>Pathogenomic sequence analysis of Bacillus cereus and Bacillus thuringiensis isolates closely related to Bacillus anthracis.</title>
        <authorList>
            <person name="Han C.S."/>
            <person name="Xie G."/>
            <person name="Challacombe J.F."/>
            <person name="Altherr M.R."/>
            <person name="Bhotika S.S."/>
            <person name="Bruce D."/>
            <person name="Campbell C.S."/>
            <person name="Campbell M.L."/>
            <person name="Chen J."/>
            <person name="Chertkov O."/>
            <person name="Cleland C."/>
            <person name="Dimitrijevic M."/>
            <person name="Doggett N.A."/>
            <person name="Fawcett J.J."/>
            <person name="Glavina T."/>
            <person name="Goodwin L.A."/>
            <person name="Hill K.K."/>
            <person name="Hitchcock P."/>
            <person name="Jackson P.J."/>
            <person name="Keim P."/>
            <person name="Kewalramani A.R."/>
            <person name="Longmire J."/>
            <person name="Lucas S."/>
            <person name="Malfatti S."/>
            <person name="McMurry K."/>
            <person name="Meincke L.J."/>
            <person name="Misra M."/>
            <person name="Moseman B.L."/>
            <person name="Mundt M."/>
            <person name="Munk A.C."/>
            <person name="Okinaka R.T."/>
            <person name="Parson-Quintana B."/>
            <person name="Reilly L.P."/>
            <person name="Richardson P."/>
            <person name="Robinson D.L."/>
            <person name="Rubin E."/>
            <person name="Saunders E."/>
            <person name="Tapia R."/>
            <person name="Tesmer J.G."/>
            <person name="Thayer N."/>
            <person name="Thompson L.S."/>
            <person name="Tice H."/>
            <person name="Ticknor L.O."/>
            <person name="Wills P.L."/>
            <person name="Brettin T.S."/>
            <person name="Gilna P."/>
        </authorList>
    </citation>
    <scope>NUCLEOTIDE SEQUENCE [LARGE SCALE GENOMIC DNA]</scope>
    <source>
        <strain>97-27</strain>
    </source>
</reference>
<proteinExistence type="inferred from homology"/>
<accession>Q6HLE4</accession>
<feature type="chain" id="PRO_0000141975" description="1-(5-phosphoribosyl)-5-[(5-phosphoribosylamino)methylideneamino] imidazole-4-carboxamide isomerase">
    <location>
        <begin position="1"/>
        <end position="239"/>
    </location>
</feature>
<feature type="active site" description="Proton acceptor" evidence="1">
    <location>
        <position position="8"/>
    </location>
</feature>
<feature type="active site" description="Proton donor" evidence="1">
    <location>
        <position position="129"/>
    </location>
</feature>